<protein>
    <recommendedName>
        <fullName evidence="1">Envelope glycoprotein H</fullName>
        <shortName evidence="1">gH</shortName>
    </recommendedName>
</protein>
<proteinExistence type="evidence at protein level"/>
<sequence length="742" mass="84321">MRPGLPSYLIILAVCLFSHLLSSRYGAEAVSEPLDKAFHLLLNTYGRPIRFLRENTTQCTYNSSLRNSTVVRENAISFNFFQSYNQYYVFHMPRCLFAGPLAEQFLNQVDLTETLERYQQRLNTYALVSKDLASYRSFSQQLKAQDSLGEQPTTVPPPIDLSIPHVWMPPQTTPHGWTESHTTSGLHRPHFNQTCILFDGHDLLFSTVTPCLHQGFYLIDELRYVKITLTEDFFVVTVSIDDDTPMLLIFGHLPRVLFKAPYQRDNFILRQTEKHELLVLVKKDQLNRHSYLKDPDFLDAALDFNYLDLSALLRNSFHRYAVDVLKSGRCQMLDRRTVEMAFAYALALFAAARQEEAGAQVSVPRALDRQAALLQIQEFMITCLSQTPPRTTLLLYPTAVDLAKRALWTPNQITDITSLVRLVYILSKQNQQHLIPQWALRQIADFALKLHKTHLASFLSAFARQELYLMGSLVHSMLVHTTERREIFIVETGLCSLAELSHFTQLLAHPHHEYLSDLYTPCSSSGRRDHSLERLTRLFPDATVPATVPAALSILSTMQPSTLETFPDLFCLPLGESFSALTVSEHVSYIVTNQYLIKGISYPVSTTVVGQSLIITQTDSQTKCELTRNMHTTHSITVALNISLENCAFCQSALLEYDDTQGVINIMYMHDSDDVLFALDPYNEVVVSSPRTHYLMLLKNGTVLEVTDVVVDATDSRLLMMSVYALSAIIGIYLLYRMLKTC</sequence>
<keyword id="KW-0002">3D-structure</keyword>
<keyword id="KW-1015">Disulfide bond</keyword>
<keyword id="KW-1169">Fusion of virus membrane with host cell membrane</keyword>
<keyword id="KW-1168">Fusion of virus membrane with host membrane</keyword>
<keyword id="KW-0325">Glycoprotein</keyword>
<keyword id="KW-1032">Host cell membrane</keyword>
<keyword id="KW-1039">Host endosome</keyword>
<keyword id="KW-1043">Host membrane</keyword>
<keyword id="KW-0945">Host-virus interaction</keyword>
<keyword id="KW-0472">Membrane</keyword>
<keyword id="KW-1185">Reference proteome</keyword>
<keyword id="KW-0730">Sialic acid</keyword>
<keyword id="KW-0732">Signal</keyword>
<keyword id="KW-0812">Transmembrane</keyword>
<keyword id="KW-1133">Transmembrane helix</keyword>
<keyword id="KW-1161">Viral attachment to host cell</keyword>
<keyword id="KW-1234">Viral attachment to host entry receptor</keyword>
<keyword id="KW-0261">Viral envelope protein</keyword>
<keyword id="KW-1162">Viral penetration into host cytoplasm</keyword>
<keyword id="KW-0946">Virion</keyword>
<keyword id="KW-1160">Virus entry into host cell</keyword>
<organism>
    <name type="scientific">Human cytomegalovirus (strain Merlin)</name>
    <name type="common">HHV-5</name>
    <name type="synonym">Human herpesvirus 5</name>
    <dbReference type="NCBI Taxonomy" id="295027"/>
    <lineage>
        <taxon>Viruses</taxon>
        <taxon>Duplodnaviria</taxon>
        <taxon>Heunggongvirae</taxon>
        <taxon>Peploviricota</taxon>
        <taxon>Herviviricetes</taxon>
        <taxon>Herpesvirales</taxon>
        <taxon>Orthoherpesviridae</taxon>
        <taxon>Betaherpesvirinae</taxon>
        <taxon>Cytomegalovirus</taxon>
        <taxon>Cytomegalovirus humanbeta5</taxon>
        <taxon>Human cytomegalovirus</taxon>
    </lineage>
</organism>
<name>GH_HCMVM</name>
<comment type="function">
    <text evidence="1 2 4 6 7 8 9 10">The heterodimer glycoprotein H-glycoprotein L is required for the fusion of viral and plasma membranes leading to virus entry into the host cell. Following initial binding to host receptor, membrane fusion is mediated by the fusion machinery composed of gB and the heterodimer gH/gL. May also be involved in the fusion between the virion envelope and the outer nuclear membrane during virion morphogenesis (By similarity). In human cytomegalovirus, forms two distincts complexes to mediate viral entry, a trimer and a pentamer at the surface of the virion envelope. The gH-gL-gO trimer is required for infection in fibroblasts by interacting with host PDGFRA, and in glioblastoma cells by interacting with host EPHA2 (PubMed:28403202, PubMed:37146061). Thsi trimer may also be required in other cell types using host TGFBR3 (PubMed:33626330). The gH-gL-UL128-UL130-UL131A pentamer is essential for viral entry in epithelial, endothelial and myeloid cells via interaction with host NRP2 (PubMed:17942555, PubMed:23853586, PubMed:28783665, PubMed:30057110).</text>
</comment>
<comment type="subunit">
    <text evidence="1 2 5 6 7 8 9 10">Interacts with glycoprotein L (gL); this interaction is necessary for the correct processing and cell surface expression of gH. The heterodimer gH/gL seems to interact with gB trimers during fusion (By similarity). Forms the envelope pentamer complex (PC) composed of gH, gL, UL128, UL130, and UL131A (PubMed:17942555, PubMed:28783665). The pentamer interacts with host NRP2 (PubMed:30057110). Forms the envelope trimer complex composed of gH, gL, and gO. The trimer interacts with host PDGFRA (PubMed:28403202, PubMed:33626330). The trimer also interacts with host EPHA2 (PubMed:37146061). The trimer also interacts with host TGFBR3 (PubMed:33626330). Interacts with UL116 (PubMed:26937030).</text>
</comment>
<comment type="subcellular location">
    <subcellularLocation>
        <location evidence="1 3">Virion membrane</location>
        <topology evidence="1">Single-pass type I membrane protein</topology>
    </subcellularLocation>
    <subcellularLocation>
        <location evidence="1">Host cell membrane</location>
        <topology evidence="1">Single-pass type I membrane protein</topology>
    </subcellularLocation>
    <subcellularLocation>
        <location evidence="1">Host endosome membrane</location>
        <topology evidence="1">Single-pass type I membrane protein</topology>
    </subcellularLocation>
    <text evidence="1">During virion morphogenesis, this protein probably accumulates in the endosomes and trans-Golgi where secondary envelopment occurs. It is probably transported to the cell surface from where it is endocytosed and directed to the trans-Golgi network (TGN).</text>
</comment>
<comment type="PTM">
    <text evidence="1">N-glycosylated, O-glycosylated, and sialylated.</text>
</comment>
<comment type="similarity">
    <text evidence="1">Belongs to the herpesviridae glycoprotein H family.</text>
</comment>
<feature type="signal peptide" evidence="1">
    <location>
        <begin position="1"/>
        <end position="23"/>
    </location>
</feature>
<feature type="chain" id="PRO_0000436654" description="Envelope glycoprotein H" evidence="1">
    <location>
        <begin position="24"/>
        <end position="742"/>
    </location>
</feature>
<feature type="topological domain" description="Virion surface" evidence="1">
    <location>
        <begin position="24"/>
        <end position="719"/>
    </location>
</feature>
<feature type="transmembrane region" description="Helical" evidence="1">
    <location>
        <begin position="720"/>
        <end position="740"/>
    </location>
</feature>
<feature type="topological domain" description="Intravirion" evidence="1">
    <location>
        <begin position="741"/>
        <end position="742"/>
    </location>
</feature>
<feature type="region of interest" description="Interaction with gL" evidence="1">
    <location>
        <begin position="217"/>
        <end position="280"/>
    </location>
</feature>
<feature type="glycosylation site" description="N-linked (GlcNAc...) asparagine; by host" evidence="1">
    <location>
        <position position="55"/>
    </location>
</feature>
<feature type="glycosylation site" description="N-linked (GlcNAc...) asparagine; by host" evidence="1">
    <location>
        <position position="62"/>
    </location>
</feature>
<feature type="glycosylation site" description="N-linked (GlcNAc...) asparagine; by host" evidence="1">
    <location>
        <position position="67"/>
    </location>
</feature>
<feature type="glycosylation site" description="N-linked (GlcNAc...) asparagine; by host" evidence="1">
    <location>
        <position position="192"/>
    </location>
</feature>
<feature type="glycosylation site" description="N-linked (GlcNAc...) asparagine; by host" evidence="1">
    <location>
        <position position="641"/>
    </location>
</feature>
<feature type="glycosylation site" description="N-linked (GlcNAc...) asparagine; by host" evidence="1">
    <location>
        <position position="700"/>
    </location>
</feature>
<feature type="disulfide bond" evidence="9">
    <location>
        <begin position="195"/>
        <end position="211"/>
    </location>
</feature>
<feature type="disulfide bond" evidence="9">
    <location>
        <begin position="330"/>
        <end position="383"/>
    </location>
</feature>
<feature type="disulfide bond" evidence="9">
    <location>
        <begin position="495"/>
        <end position="522"/>
    </location>
</feature>
<feature type="disulfide bond" evidence="9">
    <location>
        <begin position="571"/>
        <end position="624"/>
    </location>
</feature>
<feature type="strand" evidence="16">
    <location>
        <begin position="45"/>
        <end position="47"/>
    </location>
</feature>
<feature type="strand" evidence="17">
    <location>
        <begin position="49"/>
        <end position="52"/>
    </location>
</feature>
<feature type="strand" evidence="17">
    <location>
        <begin position="64"/>
        <end position="72"/>
    </location>
</feature>
<feature type="strand" evidence="17">
    <location>
        <begin position="75"/>
        <end position="83"/>
    </location>
</feature>
<feature type="strand" evidence="17">
    <location>
        <begin position="86"/>
        <end position="92"/>
    </location>
</feature>
<feature type="helix" evidence="17">
    <location>
        <begin position="94"/>
        <end position="97"/>
    </location>
</feature>
<feature type="helix" evidence="17">
    <location>
        <begin position="100"/>
        <end position="106"/>
    </location>
</feature>
<feature type="helix" evidence="17">
    <location>
        <begin position="115"/>
        <end position="121"/>
    </location>
</feature>
<feature type="turn" evidence="19">
    <location>
        <begin position="122"/>
        <end position="124"/>
    </location>
</feature>
<feature type="turn" evidence="17">
    <location>
        <begin position="128"/>
        <end position="131"/>
    </location>
</feature>
<feature type="turn" evidence="17">
    <location>
        <begin position="147"/>
        <end position="150"/>
    </location>
</feature>
<feature type="strand" evidence="17">
    <location>
        <begin position="152"/>
        <end position="155"/>
    </location>
</feature>
<feature type="strand" evidence="17">
    <location>
        <begin position="159"/>
        <end position="161"/>
    </location>
</feature>
<feature type="turn" evidence="14">
    <location>
        <begin position="172"/>
        <end position="175"/>
    </location>
</feature>
<feature type="strand" evidence="16">
    <location>
        <begin position="181"/>
        <end position="184"/>
    </location>
</feature>
<feature type="strand" evidence="17">
    <location>
        <begin position="194"/>
        <end position="197"/>
    </location>
</feature>
<feature type="turn" evidence="17">
    <location>
        <begin position="198"/>
        <end position="200"/>
    </location>
</feature>
<feature type="strand" evidence="17">
    <location>
        <begin position="202"/>
        <end position="204"/>
    </location>
</feature>
<feature type="strand" evidence="17">
    <location>
        <begin position="207"/>
        <end position="210"/>
    </location>
</feature>
<feature type="strand" evidence="17">
    <location>
        <begin position="212"/>
        <end position="219"/>
    </location>
</feature>
<feature type="strand" evidence="17">
    <location>
        <begin position="222"/>
        <end position="229"/>
    </location>
</feature>
<feature type="strand" evidence="17">
    <location>
        <begin position="231"/>
        <end position="241"/>
    </location>
</feature>
<feature type="strand" evidence="17">
    <location>
        <begin position="246"/>
        <end position="251"/>
    </location>
</feature>
<feature type="helix" evidence="17">
    <location>
        <begin position="264"/>
        <end position="267"/>
    </location>
</feature>
<feature type="strand" evidence="17">
    <location>
        <begin position="268"/>
        <end position="271"/>
    </location>
</feature>
<feature type="strand" evidence="17">
    <location>
        <begin position="276"/>
        <end position="280"/>
    </location>
</feature>
<feature type="turn" evidence="17">
    <location>
        <begin position="283"/>
        <end position="285"/>
    </location>
</feature>
<feature type="helix" evidence="17">
    <location>
        <begin position="286"/>
        <end position="288"/>
    </location>
</feature>
<feature type="helix" evidence="17">
    <location>
        <begin position="290"/>
        <end position="293"/>
    </location>
</feature>
<feature type="turn" evidence="17">
    <location>
        <begin position="295"/>
        <end position="298"/>
    </location>
</feature>
<feature type="helix" evidence="17">
    <location>
        <begin position="299"/>
        <end position="302"/>
    </location>
</feature>
<feature type="helix" evidence="17">
    <location>
        <begin position="309"/>
        <end position="315"/>
    </location>
</feature>
<feature type="helix" evidence="17">
    <location>
        <begin position="317"/>
        <end position="327"/>
    </location>
</feature>
<feature type="helix" evidence="17">
    <location>
        <begin position="335"/>
        <end position="351"/>
    </location>
</feature>
<feature type="helix" evidence="16">
    <location>
        <begin position="355"/>
        <end position="358"/>
    </location>
</feature>
<feature type="strand" evidence="16">
    <location>
        <begin position="359"/>
        <end position="362"/>
    </location>
</feature>
<feature type="helix" evidence="17">
    <location>
        <begin position="363"/>
        <end position="383"/>
    </location>
</feature>
<feature type="helix" evidence="14">
    <location>
        <begin position="388"/>
        <end position="390"/>
    </location>
</feature>
<feature type="helix" evidence="17">
    <location>
        <begin position="397"/>
        <end position="408"/>
    </location>
</feature>
<feature type="strand" evidence="14">
    <location>
        <begin position="409"/>
        <end position="412"/>
    </location>
</feature>
<feature type="helix" evidence="17">
    <location>
        <begin position="416"/>
        <end position="428"/>
    </location>
</feature>
<feature type="helix" evidence="17">
    <location>
        <begin position="432"/>
        <end position="434"/>
    </location>
</feature>
<feature type="helix" evidence="17">
    <location>
        <begin position="437"/>
        <end position="453"/>
    </location>
</feature>
<feature type="turn" evidence="17">
    <location>
        <begin position="454"/>
        <end position="456"/>
    </location>
</feature>
<feature type="helix" evidence="17">
    <location>
        <begin position="461"/>
        <end position="474"/>
    </location>
</feature>
<feature type="helix" evidence="17">
    <location>
        <begin position="481"/>
        <end position="493"/>
    </location>
</feature>
<feature type="helix" evidence="17">
    <location>
        <begin position="497"/>
        <end position="506"/>
    </location>
</feature>
<feature type="strand" evidence="18">
    <location>
        <begin position="507"/>
        <end position="510"/>
    </location>
</feature>
<feature type="helix" evidence="17">
    <location>
        <begin position="515"/>
        <end position="518"/>
    </location>
</feature>
<feature type="helix" evidence="17">
    <location>
        <begin position="521"/>
        <end position="523"/>
    </location>
</feature>
<feature type="strand" evidence="18">
    <location>
        <begin position="525"/>
        <end position="528"/>
    </location>
</feature>
<feature type="helix" evidence="17">
    <location>
        <begin position="532"/>
        <end position="537"/>
    </location>
</feature>
<feature type="strand" evidence="15">
    <location>
        <begin position="541"/>
        <end position="543"/>
    </location>
</feature>
<feature type="helix" evidence="17">
    <location>
        <begin position="548"/>
        <end position="558"/>
    </location>
</feature>
<feature type="turn" evidence="17">
    <location>
        <begin position="567"/>
        <end position="571"/>
    </location>
</feature>
<feature type="strand" evidence="19">
    <location>
        <begin position="574"/>
        <end position="576"/>
    </location>
</feature>
<feature type="strand" evidence="17">
    <location>
        <begin position="578"/>
        <end position="581"/>
    </location>
</feature>
<feature type="strand" evidence="17">
    <location>
        <begin position="584"/>
        <end position="594"/>
    </location>
</feature>
<feature type="strand" evidence="17">
    <location>
        <begin position="597"/>
        <end position="603"/>
    </location>
</feature>
<feature type="strand" evidence="17">
    <location>
        <begin position="614"/>
        <end position="619"/>
    </location>
</feature>
<feature type="turn" evidence="17">
    <location>
        <begin position="646"/>
        <end position="649"/>
    </location>
</feature>
<feature type="strand" evidence="17">
    <location>
        <begin position="650"/>
        <end position="658"/>
    </location>
</feature>
<feature type="turn" evidence="17">
    <location>
        <begin position="659"/>
        <end position="661"/>
    </location>
</feature>
<feature type="strand" evidence="17">
    <location>
        <begin position="662"/>
        <end position="669"/>
    </location>
</feature>
<feature type="helix" evidence="17">
    <location>
        <begin position="672"/>
        <end position="679"/>
    </location>
</feature>
<feature type="helix" evidence="17">
    <location>
        <begin position="681"/>
        <end position="683"/>
    </location>
</feature>
<feature type="strand" evidence="17">
    <location>
        <begin position="693"/>
        <end position="697"/>
    </location>
</feature>
<feature type="strand" evidence="18">
    <location>
        <begin position="699"/>
        <end position="701"/>
    </location>
</feature>
<feature type="strand" evidence="17">
    <location>
        <begin position="703"/>
        <end position="705"/>
    </location>
</feature>
<feature type="helix" evidence="17">
    <location>
        <begin position="707"/>
        <end position="709"/>
    </location>
</feature>
<evidence type="ECO:0000255" key="1">
    <source>
        <dbReference type="HAMAP-Rule" id="MF_04033"/>
    </source>
</evidence>
<evidence type="ECO:0000269" key="2">
    <source>
    </source>
</evidence>
<evidence type="ECO:0000269" key="3">
    <source>
    </source>
</evidence>
<evidence type="ECO:0000269" key="4">
    <source>
    </source>
</evidence>
<evidence type="ECO:0000269" key="5">
    <source>
    </source>
</evidence>
<evidence type="ECO:0000269" key="6">
    <source>
    </source>
</evidence>
<evidence type="ECO:0000269" key="7">
    <source>
    </source>
</evidence>
<evidence type="ECO:0000269" key="8">
    <source>
    </source>
</evidence>
<evidence type="ECO:0000269" key="9">
    <source>
    </source>
</evidence>
<evidence type="ECO:0000269" key="10">
    <source>
    </source>
</evidence>
<evidence type="ECO:0007744" key="11">
    <source>
        <dbReference type="PDB" id="7LBE"/>
    </source>
</evidence>
<evidence type="ECO:0007744" key="12">
    <source>
        <dbReference type="PDB" id="7LBF"/>
    </source>
</evidence>
<evidence type="ECO:0007744" key="13">
    <source>
        <dbReference type="PDB" id="7LBG"/>
    </source>
</evidence>
<evidence type="ECO:0007829" key="14">
    <source>
        <dbReference type="PDB" id="5VOB"/>
    </source>
</evidence>
<evidence type="ECO:0007829" key="15">
    <source>
        <dbReference type="PDB" id="7LBE"/>
    </source>
</evidence>
<evidence type="ECO:0007829" key="16">
    <source>
        <dbReference type="PDB" id="7LBF"/>
    </source>
</evidence>
<evidence type="ECO:0007829" key="17">
    <source>
        <dbReference type="PDB" id="7LBG"/>
    </source>
</evidence>
<evidence type="ECO:0007829" key="18">
    <source>
        <dbReference type="PDB" id="7T4Q"/>
    </source>
</evidence>
<evidence type="ECO:0007829" key="19">
    <source>
        <dbReference type="PDB" id="7T4R"/>
    </source>
</evidence>
<gene>
    <name evidence="1" type="primary">gH</name>
    <name type="synonym">UL75</name>
</gene>
<dbReference type="EMBL" id="AY446894">
    <property type="protein sequence ID" value="AAR31627.1"/>
    <property type="molecule type" value="Genomic_DNA"/>
</dbReference>
<dbReference type="RefSeq" id="YP_081523.1">
    <property type="nucleotide sequence ID" value="NC_006273.2"/>
</dbReference>
<dbReference type="PDB" id="5VOB">
    <property type="method" value="X-ray"/>
    <property type="resolution" value="3.02 A"/>
    <property type="chains" value="A=1-715"/>
</dbReference>
<dbReference type="PDB" id="5VOC">
    <property type="method" value="X-ray"/>
    <property type="resolution" value="3.99 A"/>
    <property type="chains" value="A=1-715"/>
</dbReference>
<dbReference type="PDB" id="5VOD">
    <property type="method" value="X-ray"/>
    <property type="resolution" value="5.90 A"/>
    <property type="chains" value="A=1-715"/>
</dbReference>
<dbReference type="PDB" id="7LBE">
    <property type="method" value="EM"/>
    <property type="resolution" value="2.90 A"/>
    <property type="chains" value="A=1-715"/>
</dbReference>
<dbReference type="PDB" id="7LBF">
    <property type="method" value="EM"/>
    <property type="resolution" value="2.80 A"/>
    <property type="chains" value="A=1-715"/>
</dbReference>
<dbReference type="PDB" id="7LBG">
    <property type="method" value="EM"/>
    <property type="resolution" value="2.60 A"/>
    <property type="chains" value="A=1-715"/>
</dbReference>
<dbReference type="PDB" id="7T4Q">
    <property type="method" value="EM"/>
    <property type="resolution" value="2.90 A"/>
    <property type="chains" value="A=1-715"/>
</dbReference>
<dbReference type="PDB" id="7T4R">
    <property type="method" value="EM"/>
    <property type="resolution" value="3.30 A"/>
    <property type="chains" value="B/K=1-715"/>
</dbReference>
<dbReference type="PDB" id="7T4S">
    <property type="method" value="EM"/>
    <property type="resolution" value="3.10 A"/>
    <property type="chains" value="A=1-715"/>
</dbReference>
<dbReference type="PDBsum" id="5VOB"/>
<dbReference type="PDBsum" id="5VOC"/>
<dbReference type="PDBsum" id="5VOD"/>
<dbReference type="PDBsum" id="7LBE"/>
<dbReference type="PDBsum" id="7LBF"/>
<dbReference type="PDBsum" id="7LBG"/>
<dbReference type="PDBsum" id="7T4Q"/>
<dbReference type="PDBsum" id="7T4R"/>
<dbReference type="PDBsum" id="7T4S"/>
<dbReference type="EMDB" id="EMD-23252"/>
<dbReference type="EMDB" id="EMD-23253"/>
<dbReference type="EMDB" id="EMD-23254"/>
<dbReference type="SMR" id="Q6SW67"/>
<dbReference type="TCDB" id="1.G.22.1.1">
    <property type="family name" value="the cytomegalovirus (human herpesvirus 5) glycoprotein go (go) family"/>
</dbReference>
<dbReference type="GlyCosmos" id="Q6SW67">
    <property type="glycosylation" value="6 sites, No reported glycans"/>
</dbReference>
<dbReference type="GeneID" id="3077450"/>
<dbReference type="KEGG" id="vg:3077450"/>
<dbReference type="Reactome" id="R-HSA-9609690">
    <property type="pathway name" value="HCMV Early Events"/>
</dbReference>
<dbReference type="Reactome" id="R-HSA-9610379">
    <property type="pathway name" value="HCMV Late Events"/>
</dbReference>
<dbReference type="Proteomes" id="UP000000938">
    <property type="component" value="Segment"/>
</dbReference>
<dbReference type="GO" id="GO:0044175">
    <property type="term" value="C:host cell endosome membrane"/>
    <property type="evidence" value="ECO:0007669"/>
    <property type="project" value="UniProtKB-SubCell"/>
</dbReference>
<dbReference type="GO" id="GO:0020002">
    <property type="term" value="C:host cell plasma membrane"/>
    <property type="evidence" value="ECO:0007669"/>
    <property type="project" value="UniProtKB-SubCell"/>
</dbReference>
<dbReference type="GO" id="GO:0005886">
    <property type="term" value="C:plasma membrane"/>
    <property type="evidence" value="ECO:0000304"/>
    <property type="project" value="Reactome"/>
</dbReference>
<dbReference type="GO" id="GO:0019031">
    <property type="term" value="C:viral envelope"/>
    <property type="evidence" value="ECO:0000304"/>
    <property type="project" value="Reactome"/>
</dbReference>
<dbReference type="GO" id="GO:0055036">
    <property type="term" value="C:virion membrane"/>
    <property type="evidence" value="ECO:0007669"/>
    <property type="project" value="UniProtKB-SubCell"/>
</dbReference>
<dbReference type="GO" id="GO:0098670">
    <property type="term" value="P:entry receptor-mediated virion attachment to host cell"/>
    <property type="evidence" value="ECO:0007669"/>
    <property type="project" value="UniProtKB-KW"/>
</dbReference>
<dbReference type="GO" id="GO:0019064">
    <property type="term" value="P:fusion of virus membrane with host plasma membrane"/>
    <property type="evidence" value="ECO:0007669"/>
    <property type="project" value="UniProtKB-KW"/>
</dbReference>
<dbReference type="GO" id="GO:0046718">
    <property type="term" value="P:symbiont entry into host cell"/>
    <property type="evidence" value="ECO:0007669"/>
    <property type="project" value="UniProtKB-KW"/>
</dbReference>
<dbReference type="Gene3D" id="2.60.40.3190">
    <property type="entry name" value="Herpesvirus glycoprotein H, C-terminal domain"/>
    <property type="match status" value="1"/>
</dbReference>
<dbReference type="HAMAP" id="MF_04033">
    <property type="entry name" value="HSV_GH"/>
    <property type="match status" value="1"/>
</dbReference>
<dbReference type="InterPro" id="IPR003493">
    <property type="entry name" value="Herpes_gH"/>
</dbReference>
<dbReference type="InterPro" id="IPR035305">
    <property type="entry name" value="Herpes_glycoH_C"/>
</dbReference>
<dbReference type="InterPro" id="IPR038172">
    <property type="entry name" value="Herpes_glycoH_C_sf"/>
</dbReference>
<dbReference type="Pfam" id="PF17488">
    <property type="entry name" value="Herpes_glycoH_C"/>
    <property type="match status" value="1"/>
</dbReference>
<dbReference type="Pfam" id="PF02489">
    <property type="entry name" value="Herpes_glycop_H"/>
    <property type="match status" value="1"/>
</dbReference>
<organismHost>
    <name type="scientific">Homo sapiens</name>
    <name type="common">Human</name>
    <dbReference type="NCBI Taxonomy" id="9606"/>
</organismHost>
<reference key="1">
    <citation type="journal article" date="2004" name="J. Gen. Virol.">
        <title>Genetic content of wild-type human cytomegalovirus.</title>
        <authorList>
            <person name="Dolan A."/>
            <person name="Cunningham C."/>
            <person name="Hector R.D."/>
            <person name="Hassan-Walker A.F."/>
            <person name="Lee L."/>
            <person name="Addison C."/>
            <person name="Dargan D.J."/>
            <person name="McGeoch D.J."/>
            <person name="Gatherer D."/>
            <person name="Emery V.C."/>
            <person name="Griffiths P.D."/>
            <person name="Sinzger C."/>
            <person name="McSharry B.P."/>
            <person name="Wilkinson G.W.G."/>
            <person name="Davison A.J."/>
        </authorList>
    </citation>
    <scope>NUCLEOTIDE SEQUENCE [LARGE SCALE GENOMIC DNA]</scope>
</reference>
<reference key="2">
    <citation type="journal article" date="2008" name="J. Virol.">
        <title>Characterization of the human cytomegalovirus gH/gL/UL128-131 complex that mediates entry into epithelial and endothelial cells.</title>
        <authorList>
            <person name="Ryckman B.J."/>
            <person name="Rainish B.L."/>
            <person name="Chase M.C."/>
            <person name="Borton J.A."/>
            <person name="Nelson J.A."/>
            <person name="Jarvis M.A."/>
            <person name="Johnson D.C."/>
        </authorList>
    </citation>
    <scope>FUNCTION</scope>
    <scope>INTERACTION WITH GL; UL128; UL130 AND UL131A</scope>
</reference>
<reference key="3">
    <citation type="journal article" date="2013" name="PLoS Pathog.">
        <title>The HCMV gH/gL/UL128-131 complex triggers the specific cellular activation required for efficient viral internalization into target monocytes.</title>
        <authorList>
            <person name="Nogalski M.T."/>
            <person name="Chan G.C."/>
            <person name="Stevenson E.V."/>
            <person name="Collins-McMillen D.K."/>
            <person name="Yurochko A.D."/>
        </authorList>
    </citation>
    <scope>FUNCTION</scope>
</reference>
<reference key="4">
    <citation type="journal article" date="2013" name="J. Virol.">
        <title>Comparative analysis of gO isoforms reveals that strains of human cytomegalovirus differ in the ratio of gH/gL/gO and gH/gL/UL128-131 in the virion envelope.</title>
        <authorList>
            <person name="Zhou M."/>
            <person name="Yu Q."/>
            <person name="Wechsler A."/>
            <person name="Ryckman B.J."/>
        </authorList>
    </citation>
    <scope>SUBCELLULAR LOCATION</scope>
</reference>
<reference key="5">
    <citation type="journal article" date="2014" name="Acta Virol.">
        <title>Characteristics and functions of human cytomegalovirus UL128 gene/protein.</title>
        <authorList>
            <person name="Tao R."/>
            <person name="Xu J."/>
            <person name="Gao H."/>
            <person name="Zhao W."/>
            <person name="Shang S."/>
        </authorList>
    </citation>
    <scope>REVIEW</scope>
</reference>
<reference key="6">
    <citation type="journal article" date="2016" name="J. Virol.">
        <title>The Human Cytomegalovirus UL116 Gene Encodes an Envelope Glycoprotein Forming a Complex with gH Independently from gL.</title>
        <authorList>
            <person name="Calo S."/>
            <person name="Cortese M."/>
            <person name="Ciferri C."/>
            <person name="Bruno L."/>
            <person name="Gerrein R."/>
            <person name="Benucci B."/>
            <person name="Monda G."/>
            <person name="Gentile M."/>
            <person name="Kessler T."/>
            <person name="Uematsu Y."/>
            <person name="Maione D."/>
            <person name="Lilja A.E."/>
            <person name="Carfi A."/>
            <person name="Merola M."/>
        </authorList>
    </citation>
    <scope>INTERACTION WITH UL116</scope>
    <source>
        <strain>TR</strain>
    </source>
</reference>
<reference key="7">
    <citation type="journal article" date="2017" name="PLoS Pathog.">
        <title>Human cytomegalovirus glycoprotein complex gH/gL/gO uses PDGFR-alpha as a key for entry.</title>
        <authorList>
            <person name="Wu Y."/>
            <person name="Prager A."/>
            <person name="Boos S."/>
            <person name="Resch M."/>
            <person name="Brizic I."/>
            <person name="Mach M."/>
            <person name="Wildner S."/>
            <person name="Scrivano L."/>
            <person name="Adler B."/>
        </authorList>
    </citation>
    <scope>FUNCTION</scope>
    <scope>INTERACTION WITH GO; GL AND HOST PDGFRA</scope>
</reference>
<reference key="8">
    <citation type="journal article" date="2018" name="Cell">
        <title>An Unbiased Screen for Human Cytomegalovirus Identifies Neuropilin-2 as a Central Viral Receptor.</title>
        <authorList>
            <person name="Martinez-Martin N."/>
            <person name="Marcandalli J."/>
            <person name="Huang C.S."/>
            <person name="Arthur C.P."/>
            <person name="Perotti M."/>
            <person name="Foglierini M."/>
            <person name="Ho H."/>
            <person name="Dosey A.M."/>
            <person name="Shriver S."/>
            <person name="Payandeh J."/>
            <person name="Leitner A."/>
            <person name="Lanzavecchia A."/>
            <person name="Perez L."/>
            <person name="Ciferri C."/>
        </authorList>
    </citation>
    <scope>FUNCTION</scope>
    <scope>INTERACTION WITH HOST NRP2</scope>
</reference>
<reference key="9">
    <citation type="journal article" date="2023" name="PLoS Pathog.">
        <title>EphA2 is a functional entry receptor for HCMV infection of glioblastoma cells.</title>
        <authorList>
            <person name="Dong X.D."/>
            <person name="Li Y."/>
            <person name="Li Y."/>
            <person name="Sun C."/>
            <person name="Liu S.X."/>
            <person name="Duan H."/>
            <person name="Cui R."/>
            <person name="Zhong Q."/>
            <person name="Mou Y.G."/>
            <person name="Wen L."/>
            <person name="Yang B."/>
            <person name="Zeng M.S."/>
            <person name="Luo M.H."/>
            <person name="Zhang H."/>
        </authorList>
    </citation>
    <scope>FUNCTION</scope>
    <scope>INTERACTION WITH HOST EPHA2</scope>
</reference>
<reference key="10">
    <citation type="journal article" date="2017" name="Sci. Immunol.">
        <title>Structural basis for potent antibody-mediated neutralization of human cytomegalovirus.</title>
        <authorList>
            <person name="Chandramouli S."/>
            <person name="Malito E."/>
            <person name="Nguyen T."/>
            <person name="Luisi K."/>
            <person name="Donnarumma D."/>
            <person name="Xing Y."/>
            <person name="Norais N."/>
            <person name="Yu D."/>
            <person name="Carfi A."/>
        </authorList>
    </citation>
    <scope>X-RAY CRYSTALLOGRAPHY (3.02 ANGSTROMS) OF 1-715</scope>
    <scope>FUNCTION</scope>
    <scope>INTERACTION WITH GL; UL128; UL130 AND UL131A</scope>
</reference>
<reference evidence="11 12 13" key="11">
    <citation type="journal article" date="2021" name="Cell">
        <title>Structures of HCMV Trimer reveal the basis for receptor recognition and cell entry.</title>
        <authorList>
            <person name="Kschonsak M."/>
            <person name="Rouge L."/>
            <person name="Arthur C.P."/>
            <person name="Hoangdung H."/>
            <person name="Patel N."/>
            <person name="Kim I."/>
            <person name="Johnson M.C."/>
            <person name="Kraft E."/>
            <person name="Rohou A.L."/>
            <person name="Gill A."/>
            <person name="Martinez-Martin N."/>
            <person name="Payandeh J."/>
            <person name="Ciferri C."/>
        </authorList>
    </citation>
    <scope>STRUCTURE BY ELECTRON MICROSCOPY (2.60 ANGSTROMS) OF 1-715</scope>
    <scope>DISULFIDE BONDS</scope>
    <scope>INTERACTION WITH HOST TGFBR3 AND PDGFRA</scope>
    <scope>FUNCTION</scope>
</reference>
<accession>Q6SW67</accession>
<accession>D2K3N3</accession>